<feature type="chain" id="PRO_1000058489" description="Cardiolipin synthase">
    <location>
        <begin position="1"/>
        <end position="502"/>
    </location>
</feature>
<feature type="transmembrane region" description="Helical" evidence="1">
    <location>
        <begin position="7"/>
        <end position="27"/>
    </location>
</feature>
<feature type="transmembrane region" description="Helical" evidence="1">
    <location>
        <begin position="29"/>
        <end position="49"/>
    </location>
</feature>
<feature type="transmembrane region" description="Helical" evidence="1">
    <location>
        <begin position="59"/>
        <end position="79"/>
    </location>
</feature>
<feature type="domain" description="PLD phosphodiesterase 1" evidence="1">
    <location>
        <begin position="237"/>
        <end position="264"/>
    </location>
</feature>
<feature type="domain" description="PLD phosphodiesterase 2" evidence="1">
    <location>
        <begin position="415"/>
        <end position="442"/>
    </location>
</feature>
<feature type="active site" evidence="1">
    <location>
        <position position="242"/>
    </location>
</feature>
<feature type="active site" evidence="1">
    <location>
        <position position="244"/>
    </location>
</feature>
<feature type="active site" evidence="1">
    <location>
        <position position="249"/>
    </location>
</feature>
<feature type="active site" evidence="1">
    <location>
        <position position="420"/>
    </location>
</feature>
<feature type="active site" evidence="1">
    <location>
        <position position="422"/>
    </location>
</feature>
<feature type="active site" evidence="1">
    <location>
        <position position="427"/>
    </location>
</feature>
<accession>A4IL76</accession>
<organism>
    <name type="scientific">Geobacillus thermodenitrificans (strain NG80-2)</name>
    <dbReference type="NCBI Taxonomy" id="420246"/>
    <lineage>
        <taxon>Bacteria</taxon>
        <taxon>Bacillati</taxon>
        <taxon>Bacillota</taxon>
        <taxon>Bacilli</taxon>
        <taxon>Bacillales</taxon>
        <taxon>Anoxybacillaceae</taxon>
        <taxon>Geobacillus</taxon>
    </lineage>
</organism>
<reference key="1">
    <citation type="journal article" date="2007" name="Proc. Natl. Acad. Sci. U.S.A.">
        <title>Genome and proteome of long-chain alkane degrading Geobacillus thermodenitrificans NG80-2 isolated from a deep-subsurface oil reservoir.</title>
        <authorList>
            <person name="Feng L."/>
            <person name="Wang W."/>
            <person name="Cheng J."/>
            <person name="Ren Y."/>
            <person name="Zhao G."/>
            <person name="Gao C."/>
            <person name="Tang Y."/>
            <person name="Liu X."/>
            <person name="Han W."/>
            <person name="Peng X."/>
            <person name="Liu R."/>
            <person name="Wang L."/>
        </authorList>
    </citation>
    <scope>NUCLEOTIDE SEQUENCE [LARGE SCALE GENOMIC DNA]</scope>
    <source>
        <strain>NG80-2</strain>
    </source>
</reference>
<name>CLS_GEOTN</name>
<gene>
    <name type="primary">cls</name>
    <name type="ordered locus">GTNG_0700</name>
</gene>
<proteinExistence type="inferred from homology"/>
<comment type="function">
    <text evidence="1">Catalyzes the reversible phosphatidyl group transfer from one phosphatidylglycerol molecule to another to form cardiolipin (CL) (diphosphatidylglycerol) and glycerol.</text>
</comment>
<comment type="catalytic activity">
    <reaction evidence="1">
        <text>2 a 1,2-diacyl-sn-glycero-3-phospho-(1'-sn-glycerol) = a cardiolipin + glycerol</text>
        <dbReference type="Rhea" id="RHEA:31451"/>
        <dbReference type="ChEBI" id="CHEBI:17754"/>
        <dbReference type="ChEBI" id="CHEBI:62237"/>
        <dbReference type="ChEBI" id="CHEBI:64716"/>
    </reaction>
</comment>
<comment type="subcellular location">
    <subcellularLocation>
        <location evidence="1">Cell membrane</location>
        <topology evidence="1">Multi-pass membrane protein</topology>
    </subcellularLocation>
</comment>
<comment type="similarity">
    <text evidence="1">Belongs to the phospholipase D family. Cardiolipin synthase subfamily.</text>
</comment>
<keyword id="KW-1003">Cell membrane</keyword>
<keyword id="KW-0444">Lipid biosynthesis</keyword>
<keyword id="KW-0443">Lipid metabolism</keyword>
<keyword id="KW-0472">Membrane</keyword>
<keyword id="KW-0594">Phospholipid biosynthesis</keyword>
<keyword id="KW-1208">Phospholipid metabolism</keyword>
<keyword id="KW-0677">Repeat</keyword>
<keyword id="KW-0808">Transferase</keyword>
<keyword id="KW-0812">Transmembrane</keyword>
<keyword id="KW-1133">Transmembrane helix</keyword>
<dbReference type="EC" id="2.7.8.-" evidence="1"/>
<dbReference type="EMBL" id="CP000557">
    <property type="protein sequence ID" value="ABO66080.1"/>
    <property type="molecule type" value="Genomic_DNA"/>
</dbReference>
<dbReference type="RefSeq" id="WP_008878967.1">
    <property type="nucleotide sequence ID" value="NC_009328.1"/>
</dbReference>
<dbReference type="SMR" id="A4IL76"/>
<dbReference type="GeneID" id="87621671"/>
<dbReference type="KEGG" id="gtn:GTNG_0700"/>
<dbReference type="eggNOG" id="COG1502">
    <property type="taxonomic scope" value="Bacteria"/>
</dbReference>
<dbReference type="HOGENOM" id="CLU_038053_1_2_9"/>
<dbReference type="Proteomes" id="UP000001578">
    <property type="component" value="Chromosome"/>
</dbReference>
<dbReference type="GO" id="GO:0005886">
    <property type="term" value="C:plasma membrane"/>
    <property type="evidence" value="ECO:0007669"/>
    <property type="project" value="UniProtKB-SubCell"/>
</dbReference>
<dbReference type="GO" id="GO:0008808">
    <property type="term" value="F:cardiolipin synthase activity"/>
    <property type="evidence" value="ECO:0007669"/>
    <property type="project" value="InterPro"/>
</dbReference>
<dbReference type="GO" id="GO:0032049">
    <property type="term" value="P:cardiolipin biosynthetic process"/>
    <property type="evidence" value="ECO:0007669"/>
    <property type="project" value="InterPro"/>
</dbReference>
<dbReference type="CDD" id="cd09110">
    <property type="entry name" value="PLDc_CLS_1"/>
    <property type="match status" value="1"/>
</dbReference>
<dbReference type="CDD" id="cd09112">
    <property type="entry name" value="PLDc_CLS_2"/>
    <property type="match status" value="1"/>
</dbReference>
<dbReference type="FunFam" id="3.30.870.10:FF:000014">
    <property type="entry name" value="Cardiolipin synthase"/>
    <property type="match status" value="1"/>
</dbReference>
<dbReference type="FunFam" id="3.30.870.10:FF:000021">
    <property type="entry name" value="Cardiolipin synthase"/>
    <property type="match status" value="1"/>
</dbReference>
<dbReference type="Gene3D" id="3.30.870.10">
    <property type="entry name" value="Endonuclease Chain A"/>
    <property type="match status" value="2"/>
</dbReference>
<dbReference type="HAMAP" id="MF_01916">
    <property type="entry name" value="Cardiolipin_synth_Cls"/>
    <property type="match status" value="1"/>
</dbReference>
<dbReference type="InterPro" id="IPR030874">
    <property type="entry name" value="Cardiolipin_synth_Firmi"/>
</dbReference>
<dbReference type="InterPro" id="IPR022924">
    <property type="entry name" value="Cardiolipin_synthase"/>
</dbReference>
<dbReference type="InterPro" id="IPR027379">
    <property type="entry name" value="CLS_N"/>
</dbReference>
<dbReference type="InterPro" id="IPR025202">
    <property type="entry name" value="PLD-like_dom"/>
</dbReference>
<dbReference type="InterPro" id="IPR001736">
    <property type="entry name" value="PLipase_D/transphosphatidylase"/>
</dbReference>
<dbReference type="NCBIfam" id="TIGR04265">
    <property type="entry name" value="bac_cardiolipin"/>
    <property type="match status" value="1"/>
</dbReference>
<dbReference type="PANTHER" id="PTHR21248">
    <property type="entry name" value="CARDIOLIPIN SYNTHASE"/>
    <property type="match status" value="1"/>
</dbReference>
<dbReference type="PANTHER" id="PTHR21248:SF20">
    <property type="entry name" value="CARDIOLIPIN SYNTHASE YWIE-RELATED"/>
    <property type="match status" value="1"/>
</dbReference>
<dbReference type="Pfam" id="PF13091">
    <property type="entry name" value="PLDc_2"/>
    <property type="match status" value="2"/>
</dbReference>
<dbReference type="Pfam" id="PF13396">
    <property type="entry name" value="PLDc_N"/>
    <property type="match status" value="1"/>
</dbReference>
<dbReference type="SMART" id="SM00155">
    <property type="entry name" value="PLDc"/>
    <property type="match status" value="2"/>
</dbReference>
<dbReference type="SUPFAM" id="SSF56024">
    <property type="entry name" value="Phospholipase D/nuclease"/>
    <property type="match status" value="2"/>
</dbReference>
<dbReference type="PROSITE" id="PS50035">
    <property type="entry name" value="PLD"/>
    <property type="match status" value="2"/>
</dbReference>
<evidence type="ECO:0000255" key="1">
    <source>
        <dbReference type="HAMAP-Rule" id="MF_01916"/>
    </source>
</evidence>
<sequence>MRNTSRVAILIVIVGVLLTLTHDYWGGKLLGIFSVLISCSVVFIAFVISLENRKPAQTIAWLAVLGSFPFLGFLFYLLFGRNYWQQRRFKKKAESDEAVLLKFQEPSPIAIERLPMAPHQRPLLHLAYRIGQHPVSLASQTAVLTNGEETFAAIFDELEKAQHHIHLEYYIVRHDEIGQKLKHVLMEKACQGVHVRFLYDAVGSWKLSNAYIEELRAAGVEMIPFSPVRLPFLSNQINFRNHRKIIVIDGGVGFVGGLNIGDEYLGKDEYFGFWRDTHLLIRGEAVRTLQLIFLQDWYYMTGERLLTPEYLSPPLIVEEGQGGVQLIAGGPDQKWEVIKQLYFAMITSAKRSIWVASPYFVPDEDILTALKVAALSGIDVRLLAPKRPDKKIVFYASRSYFPELLEAGVKIYEYEKGFLHSKVIVVDGELASIGTANMDMRSFHLNFEVNAFLYYTDSTNKLVNDFLEDFRHASPIDYVQFQQRPFRVRIVESVSRLLSPLL</sequence>
<protein>
    <recommendedName>
        <fullName evidence="1">Cardiolipin synthase</fullName>
        <shortName evidence="1">CL synthase</shortName>
        <ecNumber evidence="1">2.7.8.-</ecNumber>
    </recommendedName>
</protein>